<gene>
    <name evidence="1" type="primary">rplI</name>
    <name type="ordered locus">GbCGDNIH1_2216</name>
</gene>
<dbReference type="EMBL" id="CP000394">
    <property type="protein sequence ID" value="ABI63114.1"/>
    <property type="molecule type" value="Genomic_DNA"/>
</dbReference>
<dbReference type="RefSeq" id="WP_011632916.1">
    <property type="nucleotide sequence ID" value="NC_008343.2"/>
</dbReference>
<dbReference type="SMR" id="Q0BPY8"/>
<dbReference type="STRING" id="391165.GbCGDNIH1_2216"/>
<dbReference type="GeneID" id="69746395"/>
<dbReference type="KEGG" id="gbe:GbCGDNIH1_2216"/>
<dbReference type="eggNOG" id="COG0359">
    <property type="taxonomic scope" value="Bacteria"/>
</dbReference>
<dbReference type="HOGENOM" id="CLU_078938_1_0_5"/>
<dbReference type="OrthoDB" id="9788336at2"/>
<dbReference type="Proteomes" id="UP000001963">
    <property type="component" value="Chromosome"/>
</dbReference>
<dbReference type="GO" id="GO:1990904">
    <property type="term" value="C:ribonucleoprotein complex"/>
    <property type="evidence" value="ECO:0007669"/>
    <property type="project" value="UniProtKB-KW"/>
</dbReference>
<dbReference type="GO" id="GO:0005840">
    <property type="term" value="C:ribosome"/>
    <property type="evidence" value="ECO:0007669"/>
    <property type="project" value="UniProtKB-KW"/>
</dbReference>
<dbReference type="GO" id="GO:0019843">
    <property type="term" value="F:rRNA binding"/>
    <property type="evidence" value="ECO:0007669"/>
    <property type="project" value="UniProtKB-UniRule"/>
</dbReference>
<dbReference type="GO" id="GO:0003735">
    <property type="term" value="F:structural constituent of ribosome"/>
    <property type="evidence" value="ECO:0007669"/>
    <property type="project" value="InterPro"/>
</dbReference>
<dbReference type="GO" id="GO:0006412">
    <property type="term" value="P:translation"/>
    <property type="evidence" value="ECO:0007669"/>
    <property type="project" value="UniProtKB-UniRule"/>
</dbReference>
<dbReference type="Gene3D" id="3.10.430.100">
    <property type="entry name" value="Ribosomal protein L9, C-terminal domain"/>
    <property type="match status" value="1"/>
</dbReference>
<dbReference type="Gene3D" id="3.40.5.10">
    <property type="entry name" value="Ribosomal protein L9, N-terminal domain"/>
    <property type="match status" value="1"/>
</dbReference>
<dbReference type="HAMAP" id="MF_00503">
    <property type="entry name" value="Ribosomal_bL9"/>
    <property type="match status" value="1"/>
</dbReference>
<dbReference type="InterPro" id="IPR000244">
    <property type="entry name" value="Ribosomal_bL9"/>
</dbReference>
<dbReference type="InterPro" id="IPR009027">
    <property type="entry name" value="Ribosomal_bL9/RNase_H1_N"/>
</dbReference>
<dbReference type="InterPro" id="IPR020594">
    <property type="entry name" value="Ribosomal_bL9_bac/chp"/>
</dbReference>
<dbReference type="InterPro" id="IPR020069">
    <property type="entry name" value="Ribosomal_bL9_C"/>
</dbReference>
<dbReference type="InterPro" id="IPR036791">
    <property type="entry name" value="Ribosomal_bL9_C_sf"/>
</dbReference>
<dbReference type="InterPro" id="IPR020070">
    <property type="entry name" value="Ribosomal_bL9_N"/>
</dbReference>
<dbReference type="InterPro" id="IPR036935">
    <property type="entry name" value="Ribosomal_bL9_N_sf"/>
</dbReference>
<dbReference type="NCBIfam" id="TIGR00158">
    <property type="entry name" value="L9"/>
    <property type="match status" value="1"/>
</dbReference>
<dbReference type="PANTHER" id="PTHR21368">
    <property type="entry name" value="50S RIBOSOMAL PROTEIN L9"/>
    <property type="match status" value="1"/>
</dbReference>
<dbReference type="Pfam" id="PF03948">
    <property type="entry name" value="Ribosomal_L9_C"/>
    <property type="match status" value="1"/>
</dbReference>
<dbReference type="Pfam" id="PF01281">
    <property type="entry name" value="Ribosomal_L9_N"/>
    <property type="match status" value="1"/>
</dbReference>
<dbReference type="SUPFAM" id="SSF55658">
    <property type="entry name" value="L9 N-domain-like"/>
    <property type="match status" value="1"/>
</dbReference>
<dbReference type="SUPFAM" id="SSF55653">
    <property type="entry name" value="Ribosomal protein L9 C-domain"/>
    <property type="match status" value="1"/>
</dbReference>
<dbReference type="PROSITE" id="PS00651">
    <property type="entry name" value="RIBOSOMAL_L9"/>
    <property type="match status" value="1"/>
</dbReference>
<keyword id="KW-1185">Reference proteome</keyword>
<keyword id="KW-0687">Ribonucleoprotein</keyword>
<keyword id="KW-0689">Ribosomal protein</keyword>
<keyword id="KW-0694">RNA-binding</keyword>
<keyword id="KW-0699">rRNA-binding</keyword>
<comment type="function">
    <text evidence="1">Binds to the 23S rRNA.</text>
</comment>
<comment type="similarity">
    <text evidence="1">Belongs to the bacterial ribosomal protein bL9 family.</text>
</comment>
<name>RL9_GRABC</name>
<evidence type="ECO:0000255" key="1">
    <source>
        <dbReference type="HAMAP-Rule" id="MF_00503"/>
    </source>
</evidence>
<evidence type="ECO:0000305" key="2"/>
<reference key="1">
    <citation type="journal article" date="2007" name="J. Bacteriol.">
        <title>Genome sequence analysis of the emerging human pathogenic acetic acid bacterium Granulibacter bethesdensis.</title>
        <authorList>
            <person name="Greenberg D.E."/>
            <person name="Porcella S.F."/>
            <person name="Zelazny A.M."/>
            <person name="Virtaneva K."/>
            <person name="Sturdevant D.E."/>
            <person name="Kupko J.J. III"/>
            <person name="Barbian K.D."/>
            <person name="Babar A."/>
            <person name="Dorward D.W."/>
            <person name="Holland S.M."/>
        </authorList>
    </citation>
    <scope>NUCLEOTIDE SEQUENCE [LARGE SCALE GENOMIC DNA]</scope>
    <source>
        <strain>ATCC BAA-1260 / CGDNIH1</strain>
    </source>
</reference>
<organism>
    <name type="scientific">Granulibacter bethesdensis (strain ATCC BAA-1260 / CGDNIH1)</name>
    <dbReference type="NCBI Taxonomy" id="391165"/>
    <lineage>
        <taxon>Bacteria</taxon>
        <taxon>Pseudomonadati</taxon>
        <taxon>Pseudomonadota</taxon>
        <taxon>Alphaproteobacteria</taxon>
        <taxon>Acetobacterales</taxon>
        <taxon>Acetobacteraceae</taxon>
        <taxon>Granulibacter</taxon>
    </lineage>
</organism>
<feature type="chain" id="PRO_1000014784" description="Large ribosomal subunit protein bL9">
    <location>
        <begin position="1"/>
        <end position="191"/>
    </location>
</feature>
<protein>
    <recommendedName>
        <fullName evidence="1">Large ribosomal subunit protein bL9</fullName>
    </recommendedName>
    <alternativeName>
        <fullName evidence="2">50S ribosomal protein L9</fullName>
    </alternativeName>
</protein>
<sequence length="191" mass="20631">MAAVELILLQRVEKLGQMGDLVRVKPGYARNFLLPGGRAIRATKANTERFEQQRAQLEAQNLKRREEAERIAERVSGLSVVIIRQAGESGGLYGSVSSRDIAVAITESGLSVNRQQIQLDQPIKMLGLTDVRVVLHPEVVLPVTVNVARSVEEAERQARGEAVGLAAEEAAAAAEAALIEVADEEEVEISA</sequence>
<proteinExistence type="inferred from homology"/>
<accession>Q0BPY8</accession>